<protein>
    <recommendedName>
        <fullName>G-type lectin S-receptor-like serine/threonine-protein kinase At1g11300</fullName>
        <ecNumber>2.7.11.1</ecNumber>
    </recommendedName>
</protein>
<comment type="catalytic activity">
    <reaction>
        <text>L-seryl-[protein] + ATP = O-phospho-L-seryl-[protein] + ADP + H(+)</text>
        <dbReference type="Rhea" id="RHEA:17989"/>
        <dbReference type="Rhea" id="RHEA-COMP:9863"/>
        <dbReference type="Rhea" id="RHEA-COMP:11604"/>
        <dbReference type="ChEBI" id="CHEBI:15378"/>
        <dbReference type="ChEBI" id="CHEBI:29999"/>
        <dbReference type="ChEBI" id="CHEBI:30616"/>
        <dbReference type="ChEBI" id="CHEBI:83421"/>
        <dbReference type="ChEBI" id="CHEBI:456216"/>
        <dbReference type="EC" id="2.7.11.1"/>
    </reaction>
</comment>
<comment type="catalytic activity">
    <reaction>
        <text>L-threonyl-[protein] + ATP = O-phospho-L-threonyl-[protein] + ADP + H(+)</text>
        <dbReference type="Rhea" id="RHEA:46608"/>
        <dbReference type="Rhea" id="RHEA-COMP:11060"/>
        <dbReference type="Rhea" id="RHEA-COMP:11605"/>
        <dbReference type="ChEBI" id="CHEBI:15378"/>
        <dbReference type="ChEBI" id="CHEBI:30013"/>
        <dbReference type="ChEBI" id="CHEBI:30616"/>
        <dbReference type="ChEBI" id="CHEBI:61977"/>
        <dbReference type="ChEBI" id="CHEBI:456216"/>
        <dbReference type="EC" id="2.7.11.1"/>
    </reaction>
</comment>
<comment type="subcellular location">
    <subcellularLocation>
        <location evidence="1">Cell membrane</location>
        <topology evidence="1">Single-pass type I membrane protein</topology>
    </subcellularLocation>
</comment>
<comment type="similarity">
    <text evidence="4">Belongs to the protein kinase superfamily. Ser/Thr protein kinase family.</text>
</comment>
<organism>
    <name type="scientific">Arabidopsis thaliana</name>
    <name type="common">Mouse-ear cress</name>
    <dbReference type="NCBI Taxonomy" id="3702"/>
    <lineage>
        <taxon>Eukaryota</taxon>
        <taxon>Viridiplantae</taxon>
        <taxon>Streptophyta</taxon>
        <taxon>Embryophyta</taxon>
        <taxon>Tracheophyta</taxon>
        <taxon>Spermatophyta</taxon>
        <taxon>Magnoliopsida</taxon>
        <taxon>eudicotyledons</taxon>
        <taxon>Gunneridae</taxon>
        <taxon>Pentapetalae</taxon>
        <taxon>rosids</taxon>
        <taxon>malvids</taxon>
        <taxon>Brassicales</taxon>
        <taxon>Brassicaceae</taxon>
        <taxon>Camelineae</taxon>
        <taxon>Arabidopsis</taxon>
    </lineage>
</organism>
<proteinExistence type="evidence at transcript level"/>
<name>Y1130_ARATH</name>
<reference key="1">
    <citation type="journal article" date="2000" name="Nature">
        <title>Sequence and analysis of chromosome 1 of the plant Arabidopsis thaliana.</title>
        <authorList>
            <person name="Theologis A."/>
            <person name="Ecker J.R."/>
            <person name="Palm C.J."/>
            <person name="Federspiel N.A."/>
            <person name="Kaul S."/>
            <person name="White O."/>
            <person name="Alonso J."/>
            <person name="Altafi H."/>
            <person name="Araujo R."/>
            <person name="Bowman C.L."/>
            <person name="Brooks S.Y."/>
            <person name="Buehler E."/>
            <person name="Chan A."/>
            <person name="Chao Q."/>
            <person name="Chen H."/>
            <person name="Cheuk R.F."/>
            <person name="Chin C.W."/>
            <person name="Chung M.K."/>
            <person name="Conn L."/>
            <person name="Conway A.B."/>
            <person name="Conway A.R."/>
            <person name="Creasy T.H."/>
            <person name="Dewar K."/>
            <person name="Dunn P."/>
            <person name="Etgu P."/>
            <person name="Feldblyum T.V."/>
            <person name="Feng J.-D."/>
            <person name="Fong B."/>
            <person name="Fujii C.Y."/>
            <person name="Gill J.E."/>
            <person name="Goldsmith A.D."/>
            <person name="Haas B."/>
            <person name="Hansen N.F."/>
            <person name="Hughes B."/>
            <person name="Huizar L."/>
            <person name="Hunter J.L."/>
            <person name="Jenkins J."/>
            <person name="Johnson-Hopson C."/>
            <person name="Khan S."/>
            <person name="Khaykin E."/>
            <person name="Kim C.J."/>
            <person name="Koo H.L."/>
            <person name="Kremenetskaia I."/>
            <person name="Kurtz D.B."/>
            <person name="Kwan A."/>
            <person name="Lam B."/>
            <person name="Langin-Hooper S."/>
            <person name="Lee A."/>
            <person name="Lee J.M."/>
            <person name="Lenz C.A."/>
            <person name="Li J.H."/>
            <person name="Li Y.-P."/>
            <person name="Lin X."/>
            <person name="Liu S.X."/>
            <person name="Liu Z.A."/>
            <person name="Luros J.S."/>
            <person name="Maiti R."/>
            <person name="Marziali A."/>
            <person name="Militscher J."/>
            <person name="Miranda M."/>
            <person name="Nguyen M."/>
            <person name="Nierman W.C."/>
            <person name="Osborne B.I."/>
            <person name="Pai G."/>
            <person name="Peterson J."/>
            <person name="Pham P.K."/>
            <person name="Rizzo M."/>
            <person name="Rooney T."/>
            <person name="Rowley D."/>
            <person name="Sakano H."/>
            <person name="Salzberg S.L."/>
            <person name="Schwartz J.R."/>
            <person name="Shinn P."/>
            <person name="Southwick A.M."/>
            <person name="Sun H."/>
            <person name="Tallon L.J."/>
            <person name="Tambunga G."/>
            <person name="Toriumi M.J."/>
            <person name="Town C.D."/>
            <person name="Utterback T."/>
            <person name="Van Aken S."/>
            <person name="Vaysberg M."/>
            <person name="Vysotskaia V.S."/>
            <person name="Walker M."/>
            <person name="Wu D."/>
            <person name="Yu G."/>
            <person name="Fraser C.M."/>
            <person name="Venter J.C."/>
            <person name="Davis R.W."/>
        </authorList>
    </citation>
    <scope>NUCLEOTIDE SEQUENCE [LARGE SCALE GENOMIC DNA]</scope>
    <source>
        <strain>cv. Columbia</strain>
    </source>
</reference>
<reference key="2">
    <citation type="journal article" date="2017" name="Plant J.">
        <title>Araport11: a complete reannotation of the Arabidopsis thaliana reference genome.</title>
        <authorList>
            <person name="Cheng C.Y."/>
            <person name="Krishnakumar V."/>
            <person name="Chan A.P."/>
            <person name="Thibaud-Nissen F."/>
            <person name="Schobel S."/>
            <person name="Town C.D."/>
        </authorList>
    </citation>
    <scope>GENOME REANNOTATION</scope>
    <source>
        <strain>cv. Columbia</strain>
    </source>
</reference>
<reference key="3">
    <citation type="journal article" date="2004" name="Genome Res.">
        <title>Whole genome sequence comparisons and 'full-length' cDNA sequences: a combined approach to evaluate and improve Arabidopsis genome annotation.</title>
        <authorList>
            <person name="Castelli V."/>
            <person name="Aury J.-M."/>
            <person name="Jaillon O."/>
            <person name="Wincker P."/>
            <person name="Clepet C."/>
            <person name="Menard M."/>
            <person name="Cruaud C."/>
            <person name="Quetier F."/>
            <person name="Scarpelli C."/>
            <person name="Schaechter V."/>
            <person name="Temple G."/>
            <person name="Caboche M."/>
            <person name="Weissenbach J."/>
            <person name="Salanoubat M."/>
        </authorList>
    </citation>
    <scope>NUCLEOTIDE SEQUENCE [LARGE SCALE MRNA] OF 1-446</scope>
    <source>
        <strain>cv. Columbia</strain>
    </source>
</reference>
<keyword id="KW-0067">ATP-binding</keyword>
<keyword id="KW-1003">Cell membrane</keyword>
<keyword id="KW-1015">Disulfide bond</keyword>
<keyword id="KW-0245">EGF-like domain</keyword>
<keyword id="KW-0325">Glycoprotein</keyword>
<keyword id="KW-0418">Kinase</keyword>
<keyword id="KW-0430">Lectin</keyword>
<keyword id="KW-0472">Membrane</keyword>
<keyword id="KW-0547">Nucleotide-binding</keyword>
<keyword id="KW-0675">Receptor</keyword>
<keyword id="KW-1185">Reference proteome</keyword>
<keyword id="KW-0723">Serine/threonine-protein kinase</keyword>
<keyword id="KW-0732">Signal</keyword>
<keyword id="KW-0808">Transferase</keyword>
<keyword id="KW-0812">Transmembrane</keyword>
<keyword id="KW-1133">Transmembrane helix</keyword>
<dbReference type="EC" id="2.7.11.1"/>
<dbReference type="EMBL" id="AC007259">
    <property type="protein sequence ID" value="AAD49993.1"/>
    <property type="molecule type" value="Genomic_DNA"/>
</dbReference>
<dbReference type="EMBL" id="CP002684">
    <property type="protein sequence ID" value="AEE28714.2"/>
    <property type="molecule type" value="Genomic_DNA"/>
</dbReference>
<dbReference type="EMBL" id="BX816508">
    <property type="status" value="NOT_ANNOTATED_CDS"/>
    <property type="molecule type" value="mRNA"/>
</dbReference>
<dbReference type="PIR" id="H86246">
    <property type="entry name" value="H86246"/>
</dbReference>
<dbReference type="RefSeq" id="NP_172597.3">
    <property type="nucleotide sequence ID" value="NM_101003.3"/>
</dbReference>
<dbReference type="SMR" id="Q9SXB4"/>
<dbReference type="STRING" id="3702.Q9SXB4"/>
<dbReference type="GlyGen" id="Q9SXB4">
    <property type="glycosylation" value="13 sites"/>
</dbReference>
<dbReference type="iPTMnet" id="Q9SXB4"/>
<dbReference type="PaxDb" id="3702-AT1G11300.1"/>
<dbReference type="ProteomicsDB" id="243177"/>
<dbReference type="EnsemblPlants" id="AT1G11300.1">
    <property type="protein sequence ID" value="AT1G11300.1"/>
    <property type="gene ID" value="AT1G11300"/>
</dbReference>
<dbReference type="GeneID" id="837672"/>
<dbReference type="Gramene" id="AT1G11300.1">
    <property type="protein sequence ID" value="AT1G11300.1"/>
    <property type="gene ID" value="AT1G11300"/>
</dbReference>
<dbReference type="KEGG" id="ath:AT1G11300"/>
<dbReference type="Araport" id="AT1G11300"/>
<dbReference type="TAIR" id="AT1G11300">
    <property type="gene designation" value="EGM1"/>
</dbReference>
<dbReference type="HOGENOM" id="CLU_000288_178_6_1"/>
<dbReference type="InParanoid" id="Q9SXB4"/>
<dbReference type="OMA" id="WNEDNIS"/>
<dbReference type="PRO" id="PR:Q9SXB4"/>
<dbReference type="Proteomes" id="UP000006548">
    <property type="component" value="Chromosome 1"/>
</dbReference>
<dbReference type="ExpressionAtlas" id="Q9SXB4">
    <property type="expression patterns" value="baseline and differential"/>
</dbReference>
<dbReference type="GO" id="GO:0005886">
    <property type="term" value="C:plasma membrane"/>
    <property type="evidence" value="ECO:0007669"/>
    <property type="project" value="UniProtKB-SubCell"/>
</dbReference>
<dbReference type="GO" id="GO:0005524">
    <property type="term" value="F:ATP binding"/>
    <property type="evidence" value="ECO:0007669"/>
    <property type="project" value="UniProtKB-KW"/>
</dbReference>
<dbReference type="GO" id="GO:0005516">
    <property type="term" value="F:calmodulin binding"/>
    <property type="evidence" value="ECO:0000250"/>
    <property type="project" value="UniProtKB"/>
</dbReference>
<dbReference type="GO" id="GO:0030246">
    <property type="term" value="F:carbohydrate binding"/>
    <property type="evidence" value="ECO:0007669"/>
    <property type="project" value="UniProtKB-KW"/>
</dbReference>
<dbReference type="GO" id="GO:0106310">
    <property type="term" value="F:protein serine kinase activity"/>
    <property type="evidence" value="ECO:0007669"/>
    <property type="project" value="RHEA"/>
</dbReference>
<dbReference type="GO" id="GO:0004674">
    <property type="term" value="F:protein serine/threonine kinase activity"/>
    <property type="evidence" value="ECO:0000250"/>
    <property type="project" value="UniProtKB"/>
</dbReference>
<dbReference type="GO" id="GO:0031625">
    <property type="term" value="F:ubiquitin protein ligase binding"/>
    <property type="evidence" value="ECO:0007669"/>
    <property type="project" value="UniProtKB-ARBA"/>
</dbReference>
<dbReference type="GO" id="GO:0048544">
    <property type="term" value="P:recognition of pollen"/>
    <property type="evidence" value="ECO:0007669"/>
    <property type="project" value="InterPro"/>
</dbReference>
<dbReference type="CDD" id="cd00028">
    <property type="entry name" value="B_lectin"/>
    <property type="match status" value="1"/>
</dbReference>
<dbReference type="CDD" id="cd01098">
    <property type="entry name" value="PAN_AP_plant"/>
    <property type="match status" value="1"/>
</dbReference>
<dbReference type="CDD" id="cd14066">
    <property type="entry name" value="STKc_IRAK"/>
    <property type="match status" value="1"/>
</dbReference>
<dbReference type="FunFam" id="1.10.510.10:FF:000060">
    <property type="entry name" value="G-type lectin S-receptor-like serine/threonine-protein kinase"/>
    <property type="match status" value="1"/>
</dbReference>
<dbReference type="FunFam" id="2.90.10.10:FF:000001">
    <property type="entry name" value="G-type lectin S-receptor-like serine/threonine-protein kinase"/>
    <property type="match status" value="1"/>
</dbReference>
<dbReference type="FunFam" id="3.30.200.20:FF:000145">
    <property type="entry name" value="receptor-like serine/threonine-protein kinase SD1-8"/>
    <property type="match status" value="1"/>
</dbReference>
<dbReference type="Gene3D" id="2.90.10.10">
    <property type="entry name" value="Bulb-type lectin domain"/>
    <property type="match status" value="1"/>
</dbReference>
<dbReference type="Gene3D" id="3.30.200.20">
    <property type="entry name" value="Phosphorylase Kinase, domain 1"/>
    <property type="match status" value="1"/>
</dbReference>
<dbReference type="Gene3D" id="1.10.510.10">
    <property type="entry name" value="Transferase(Phosphotransferase) domain 1"/>
    <property type="match status" value="1"/>
</dbReference>
<dbReference type="InterPro" id="IPR001480">
    <property type="entry name" value="Bulb-type_lectin_dom"/>
</dbReference>
<dbReference type="InterPro" id="IPR036426">
    <property type="entry name" value="Bulb-type_lectin_dom_sf"/>
</dbReference>
<dbReference type="InterPro" id="IPR011009">
    <property type="entry name" value="Kinase-like_dom_sf"/>
</dbReference>
<dbReference type="InterPro" id="IPR003609">
    <property type="entry name" value="Pan_app"/>
</dbReference>
<dbReference type="InterPro" id="IPR000719">
    <property type="entry name" value="Prot_kinase_dom"/>
</dbReference>
<dbReference type="InterPro" id="IPR021820">
    <property type="entry name" value="S-locus_recpt_kinase_C"/>
</dbReference>
<dbReference type="InterPro" id="IPR000858">
    <property type="entry name" value="S_locus_glycoprot_dom"/>
</dbReference>
<dbReference type="InterPro" id="IPR001245">
    <property type="entry name" value="Ser-Thr/Tyr_kinase_cat_dom"/>
</dbReference>
<dbReference type="InterPro" id="IPR008271">
    <property type="entry name" value="Ser/Thr_kinase_AS"/>
</dbReference>
<dbReference type="InterPro" id="IPR024171">
    <property type="entry name" value="SRK-like_kinase"/>
</dbReference>
<dbReference type="PANTHER" id="PTHR27002:SF1082">
    <property type="entry name" value="OS06G0693000 PROTEIN"/>
    <property type="match status" value="1"/>
</dbReference>
<dbReference type="PANTHER" id="PTHR27002">
    <property type="entry name" value="RECEPTOR-LIKE SERINE/THREONINE-PROTEIN KINASE SD1-8"/>
    <property type="match status" value="1"/>
</dbReference>
<dbReference type="Pfam" id="PF01453">
    <property type="entry name" value="B_lectin"/>
    <property type="match status" value="1"/>
</dbReference>
<dbReference type="Pfam" id="PF11883">
    <property type="entry name" value="DUF3403"/>
    <property type="match status" value="1"/>
</dbReference>
<dbReference type="Pfam" id="PF08276">
    <property type="entry name" value="PAN_2"/>
    <property type="match status" value="1"/>
</dbReference>
<dbReference type="Pfam" id="PF07714">
    <property type="entry name" value="PK_Tyr_Ser-Thr"/>
    <property type="match status" value="1"/>
</dbReference>
<dbReference type="Pfam" id="PF00954">
    <property type="entry name" value="S_locus_glycop"/>
    <property type="match status" value="1"/>
</dbReference>
<dbReference type="PIRSF" id="PIRSF000641">
    <property type="entry name" value="SRK"/>
    <property type="match status" value="1"/>
</dbReference>
<dbReference type="SMART" id="SM00108">
    <property type="entry name" value="B_lectin"/>
    <property type="match status" value="1"/>
</dbReference>
<dbReference type="SMART" id="SM00473">
    <property type="entry name" value="PAN_AP"/>
    <property type="match status" value="1"/>
</dbReference>
<dbReference type="SMART" id="SM00220">
    <property type="entry name" value="S_TKc"/>
    <property type="match status" value="1"/>
</dbReference>
<dbReference type="SUPFAM" id="SSF51110">
    <property type="entry name" value="alpha-D-mannose-specific plant lectins"/>
    <property type="match status" value="1"/>
</dbReference>
<dbReference type="SUPFAM" id="SSF56112">
    <property type="entry name" value="Protein kinase-like (PK-like)"/>
    <property type="match status" value="1"/>
</dbReference>
<dbReference type="PROSITE" id="PS50927">
    <property type="entry name" value="BULB_LECTIN"/>
    <property type="match status" value="1"/>
</dbReference>
<dbReference type="PROSITE" id="PS50948">
    <property type="entry name" value="PAN"/>
    <property type="match status" value="1"/>
</dbReference>
<dbReference type="PROSITE" id="PS50011">
    <property type="entry name" value="PROTEIN_KINASE_DOM"/>
    <property type="match status" value="1"/>
</dbReference>
<dbReference type="PROSITE" id="PS00108">
    <property type="entry name" value="PROTEIN_KINASE_ST"/>
    <property type="match status" value="1"/>
</dbReference>
<sequence length="820" mass="91542">MRLHESSSPFVCILVLSCFFLSVSLAQERAFFSGKLNDSETIVSSFRTFRFGFFSPVNSTSRYAGIWYNSVSVQTVIWVANKDKPINDSSGVISVSQDGNLVVTDGQRRVLWSTNVSTQASANSTVAELLDSGNLVLKEASSDAYLWESFKYPTDSWLPNMLVGTNARIGGGNVTITSWKSPSDPSPGSYTAALVLAAYPELFIMNNNNNNSTVWRSGPWNGQMFNGLPDVYAGVFLYRFIVNDDTNGSVTMSYANDSTLRYFYMDYRGSVIRRDWSETRRNWTVGLQVPATECDNYRRCGEFATCNPRKNPLCSCIRGFRPRNLIEWNNGNWSGGCTRRVPLQCERQNNNGSADGFLRLRRMKLPDFARRSEASEPECLRTCLQTCSCIAAAHGLGYGCMIWNGSLVDSQELSASGLDLYIRLAHSEIKTKDKRPILIGTILAGGIFVVAACVLLARRIVMKKRAKKKGRDAEQIFERVEALAGGNKGKLKELPLFEFQVLAAATNNFSLRNKLGQGGFGPVYKGKLQEGQEIAVKRLSRASGQGLEELVNEVVVISKLQHRNLVKLLGCCIAGEERMLVYEFMPKKSLDYYLFDSRRAKLLDWKTRFNIINGICRGLLYLHRDSRLRIIHRDLKASNILLDENLIPKISDFGLARIFPGNEDEANTRRVVGTYGYMAPEYAMGGLFSEKSDVFSLGVILLEIISGRRNSNSTLLAYVWSIWNEGEINSLVDPEIFDLLFEKEIHKCIHIGLLCVQEAANDRPSVSTVCSMLSSEIADIPEPKQPAFISRNNVPEAESSENSDLKDSINNVTITDVTGR</sequence>
<accession>Q9SXB4</accession>
<accession>F4I7G3</accession>
<gene>
    <name type="ordered locus">At1g11300</name>
    <name type="ORF">T28P6.6</name>
</gene>
<feature type="signal peptide" evidence="2">
    <location>
        <begin position="1"/>
        <end position="26"/>
    </location>
</feature>
<feature type="chain" id="PRO_0000401307" description="G-type lectin S-receptor-like serine/threonine-protein kinase At1g11300">
    <location>
        <begin position="27"/>
        <end position="820"/>
    </location>
</feature>
<feature type="topological domain" description="Extracellular" evidence="2">
    <location>
        <begin position="27"/>
        <end position="436"/>
    </location>
</feature>
<feature type="transmembrane region" description="Helical" evidence="2">
    <location>
        <begin position="437"/>
        <end position="457"/>
    </location>
</feature>
<feature type="topological domain" description="Cytoplasmic" evidence="2">
    <location>
        <begin position="458"/>
        <end position="820"/>
    </location>
</feature>
<feature type="domain" description="Bulb-type lectin" evidence="3">
    <location>
        <begin position="27"/>
        <end position="150"/>
    </location>
</feature>
<feature type="domain" description="EGF-like; atypical">
    <location>
        <begin position="290"/>
        <end position="326"/>
    </location>
</feature>
<feature type="domain" description="PAN" evidence="5">
    <location>
        <begin position="345"/>
        <end position="425"/>
    </location>
</feature>
<feature type="domain" description="Protein kinase" evidence="4">
    <location>
        <begin position="509"/>
        <end position="788"/>
    </location>
</feature>
<feature type="region of interest" description="CaM-binding" evidence="1">
    <location>
        <begin position="598"/>
        <end position="615"/>
    </location>
</feature>
<feature type="active site" description="Proton acceptor" evidence="4 6">
    <location>
        <position position="634"/>
    </location>
</feature>
<feature type="binding site" evidence="4">
    <location>
        <begin position="515"/>
        <end position="523"/>
    </location>
    <ligand>
        <name>ATP</name>
        <dbReference type="ChEBI" id="CHEBI:30616"/>
    </ligand>
</feature>
<feature type="binding site" evidence="4">
    <location>
        <position position="537"/>
    </location>
    <ligand>
        <name>ATP</name>
        <dbReference type="ChEBI" id="CHEBI:30616"/>
    </ligand>
</feature>
<feature type="glycosylation site" description="N-linked (GlcNAc...) asparagine" evidence="2">
    <location>
        <position position="37"/>
    </location>
</feature>
<feature type="glycosylation site" description="N-linked (GlcNAc...) asparagine" evidence="2">
    <location>
        <position position="58"/>
    </location>
</feature>
<feature type="glycosylation site" description="N-linked (GlcNAc...) asparagine" evidence="2">
    <location>
        <position position="87"/>
    </location>
</feature>
<feature type="glycosylation site" description="N-linked (GlcNAc...) asparagine" evidence="2">
    <location>
        <position position="115"/>
    </location>
</feature>
<feature type="glycosylation site" description="N-linked (GlcNAc...) asparagine" evidence="2">
    <location>
        <position position="123"/>
    </location>
</feature>
<feature type="glycosylation site" description="N-linked (GlcNAc...) asparagine" evidence="2">
    <location>
        <position position="173"/>
    </location>
</feature>
<feature type="glycosylation site" description="N-linked (GlcNAc...) asparagine" evidence="2">
    <location>
        <position position="211"/>
    </location>
</feature>
<feature type="glycosylation site" description="N-linked (GlcNAc...) asparagine" evidence="2">
    <location>
        <position position="247"/>
    </location>
</feature>
<feature type="glycosylation site" description="N-linked (GlcNAc...) asparagine" evidence="2">
    <location>
        <position position="256"/>
    </location>
</feature>
<feature type="glycosylation site" description="N-linked (GlcNAc...) asparagine" evidence="2">
    <location>
        <position position="282"/>
    </location>
</feature>
<feature type="glycosylation site" description="N-linked (GlcNAc...) asparagine" evidence="2">
    <location>
        <position position="332"/>
    </location>
</feature>
<feature type="glycosylation site" description="N-linked (GlcNAc...) asparagine" evidence="2">
    <location>
        <position position="351"/>
    </location>
</feature>
<feature type="glycosylation site" description="N-linked (GlcNAc...) asparagine" evidence="2">
    <location>
        <position position="404"/>
    </location>
</feature>
<feature type="disulfide bond" evidence="1">
    <location>
        <begin position="294"/>
        <end position="306"/>
    </location>
</feature>
<feature type="disulfide bond" evidence="1">
    <location>
        <begin position="300"/>
        <end position="314"/>
    </location>
</feature>
<feature type="disulfide bond" evidence="1">
    <location>
        <begin position="379"/>
        <end position="400"/>
    </location>
</feature>
<feature type="disulfide bond" evidence="1">
    <location>
        <begin position="383"/>
        <end position="389"/>
    </location>
</feature>
<evidence type="ECO:0000250" key="1"/>
<evidence type="ECO:0000255" key="2"/>
<evidence type="ECO:0000255" key="3">
    <source>
        <dbReference type="PROSITE-ProRule" id="PRU00038"/>
    </source>
</evidence>
<evidence type="ECO:0000255" key="4">
    <source>
        <dbReference type="PROSITE-ProRule" id="PRU00159"/>
    </source>
</evidence>
<evidence type="ECO:0000255" key="5">
    <source>
        <dbReference type="PROSITE-ProRule" id="PRU00315"/>
    </source>
</evidence>
<evidence type="ECO:0000255" key="6">
    <source>
        <dbReference type="PROSITE-ProRule" id="PRU10027"/>
    </source>
</evidence>